<feature type="chain" id="PRO_1000083563" description="HTH-type transcriptional regulator BetI">
    <location>
        <begin position="1"/>
        <end position="202"/>
    </location>
</feature>
<feature type="domain" description="HTH tetR-type" evidence="2">
    <location>
        <begin position="8"/>
        <end position="68"/>
    </location>
</feature>
<feature type="DNA-binding region" description="H-T-H motif" evidence="2">
    <location>
        <begin position="31"/>
        <end position="50"/>
    </location>
</feature>
<keyword id="KW-0238">DNA-binding</keyword>
<keyword id="KW-1185">Reference proteome</keyword>
<keyword id="KW-0678">Repressor</keyword>
<keyword id="KW-0804">Transcription</keyword>
<keyword id="KW-0805">Transcription regulation</keyword>
<organism>
    <name type="scientific">Cronobacter sakazakii (strain ATCC BAA-894)</name>
    <name type="common">Enterobacter sakazakii</name>
    <dbReference type="NCBI Taxonomy" id="290339"/>
    <lineage>
        <taxon>Bacteria</taxon>
        <taxon>Pseudomonadati</taxon>
        <taxon>Pseudomonadota</taxon>
        <taxon>Gammaproteobacteria</taxon>
        <taxon>Enterobacterales</taxon>
        <taxon>Enterobacteriaceae</taxon>
        <taxon>Cronobacter</taxon>
    </lineage>
</organism>
<proteinExistence type="inferred from homology"/>
<accession>A7MFA6</accession>
<reference key="1">
    <citation type="journal article" date="2010" name="PLoS ONE">
        <title>Genome sequence of Cronobacter sakazakii BAA-894 and comparative genomic hybridization analysis with other Cronobacter species.</title>
        <authorList>
            <person name="Kucerova E."/>
            <person name="Clifton S.W."/>
            <person name="Xia X.Q."/>
            <person name="Long F."/>
            <person name="Porwollik S."/>
            <person name="Fulton L."/>
            <person name="Fronick C."/>
            <person name="Minx P."/>
            <person name="Kyung K."/>
            <person name="Warren W."/>
            <person name="Fulton R."/>
            <person name="Feng D."/>
            <person name="Wollam A."/>
            <person name="Shah N."/>
            <person name="Bhonagiri V."/>
            <person name="Nash W.E."/>
            <person name="Hallsworth-Pepin K."/>
            <person name="Wilson R.K."/>
            <person name="McClelland M."/>
            <person name="Forsythe S.J."/>
        </authorList>
    </citation>
    <scope>NUCLEOTIDE SEQUENCE [LARGE SCALE GENOMIC DNA]</scope>
    <source>
        <strain>ATCC BAA-894</strain>
    </source>
</reference>
<dbReference type="EMBL" id="CP000783">
    <property type="protein sequence ID" value="ABU77298.1"/>
    <property type="molecule type" value="Genomic_DNA"/>
</dbReference>
<dbReference type="RefSeq" id="WP_004387948.1">
    <property type="nucleotide sequence ID" value="NC_009778.1"/>
</dbReference>
<dbReference type="SMR" id="A7MFA6"/>
<dbReference type="GeneID" id="45715777"/>
<dbReference type="KEGG" id="esa:ESA_02047"/>
<dbReference type="HOGENOM" id="CLU_069356_15_4_6"/>
<dbReference type="UniPathway" id="UPA00529"/>
<dbReference type="Proteomes" id="UP000000260">
    <property type="component" value="Chromosome"/>
</dbReference>
<dbReference type="GO" id="GO:0003700">
    <property type="term" value="F:DNA-binding transcription factor activity"/>
    <property type="evidence" value="ECO:0007669"/>
    <property type="project" value="UniProtKB-UniRule"/>
</dbReference>
<dbReference type="GO" id="GO:0000976">
    <property type="term" value="F:transcription cis-regulatory region binding"/>
    <property type="evidence" value="ECO:0007669"/>
    <property type="project" value="TreeGrafter"/>
</dbReference>
<dbReference type="GO" id="GO:0019285">
    <property type="term" value="P:glycine betaine biosynthetic process from choline"/>
    <property type="evidence" value="ECO:0007669"/>
    <property type="project" value="UniProtKB-UniRule"/>
</dbReference>
<dbReference type="GO" id="GO:0045892">
    <property type="term" value="P:negative regulation of DNA-templated transcription"/>
    <property type="evidence" value="ECO:0007669"/>
    <property type="project" value="UniProtKB-UniRule"/>
</dbReference>
<dbReference type="Gene3D" id="1.10.357.10">
    <property type="entry name" value="Tetracycline Repressor, domain 2"/>
    <property type="match status" value="1"/>
</dbReference>
<dbReference type="HAMAP" id="MF_00768">
    <property type="entry name" value="HTH_type_BetI"/>
    <property type="match status" value="1"/>
</dbReference>
<dbReference type="InterPro" id="IPR039538">
    <property type="entry name" value="BetI_C"/>
</dbReference>
<dbReference type="InterPro" id="IPR023772">
    <property type="entry name" value="DNA-bd_HTH_TetR-type_CS"/>
</dbReference>
<dbReference type="InterPro" id="IPR009057">
    <property type="entry name" value="Homeodomain-like_sf"/>
</dbReference>
<dbReference type="InterPro" id="IPR050109">
    <property type="entry name" value="HTH-type_TetR-like_transc_reg"/>
</dbReference>
<dbReference type="InterPro" id="IPR001647">
    <property type="entry name" value="HTH_TetR"/>
</dbReference>
<dbReference type="InterPro" id="IPR036271">
    <property type="entry name" value="Tet_transcr_reg_TetR-rel_C_sf"/>
</dbReference>
<dbReference type="InterPro" id="IPR017757">
    <property type="entry name" value="Tscrpt_rep_BetI"/>
</dbReference>
<dbReference type="NCBIfam" id="TIGR03384">
    <property type="entry name" value="betaine_BetI"/>
    <property type="match status" value="1"/>
</dbReference>
<dbReference type="NCBIfam" id="NF001978">
    <property type="entry name" value="PRK00767.1"/>
    <property type="match status" value="1"/>
</dbReference>
<dbReference type="PANTHER" id="PTHR30055:SF234">
    <property type="entry name" value="HTH-TYPE TRANSCRIPTIONAL REGULATOR BETI"/>
    <property type="match status" value="1"/>
</dbReference>
<dbReference type="PANTHER" id="PTHR30055">
    <property type="entry name" value="HTH-TYPE TRANSCRIPTIONAL REGULATOR RUTR"/>
    <property type="match status" value="1"/>
</dbReference>
<dbReference type="Pfam" id="PF13977">
    <property type="entry name" value="TetR_C_6"/>
    <property type="match status" value="1"/>
</dbReference>
<dbReference type="Pfam" id="PF00440">
    <property type="entry name" value="TetR_N"/>
    <property type="match status" value="1"/>
</dbReference>
<dbReference type="PRINTS" id="PR00455">
    <property type="entry name" value="HTHTETR"/>
</dbReference>
<dbReference type="SUPFAM" id="SSF46689">
    <property type="entry name" value="Homeodomain-like"/>
    <property type="match status" value="1"/>
</dbReference>
<dbReference type="SUPFAM" id="SSF48498">
    <property type="entry name" value="Tetracyclin repressor-like, C-terminal domain"/>
    <property type="match status" value="1"/>
</dbReference>
<dbReference type="PROSITE" id="PS01081">
    <property type="entry name" value="HTH_TETR_1"/>
    <property type="match status" value="1"/>
</dbReference>
<dbReference type="PROSITE" id="PS50977">
    <property type="entry name" value="HTH_TETR_2"/>
    <property type="match status" value="1"/>
</dbReference>
<name>BETI_CROS8</name>
<evidence type="ECO:0000250" key="1"/>
<evidence type="ECO:0000255" key="2">
    <source>
        <dbReference type="HAMAP-Rule" id="MF_00768"/>
    </source>
</evidence>
<protein>
    <recommendedName>
        <fullName evidence="2">HTH-type transcriptional regulator BetI</fullName>
    </recommendedName>
</protein>
<sequence>MPKVGMQPIRRRQLIDATLSTINDVGINDATIAQIARRAGVSAGIISHYFKDKNGLLEATMRDITRQLRDAVAARLRPLAQASTEARLLAIVEGNFDDTQVHSAAMKAWLDFWASSMHQPQLGRLERVSSRRLFSTLAAEFRRELPREQARLAAHGLASLIDGLWLRAALSGQPFNLETARTLTTQFIRQQLAGAAPHEKEE</sequence>
<gene>
    <name evidence="2" type="primary">betI</name>
    <name type="ordered locus">ESA_02047</name>
</gene>
<comment type="function">
    <text evidence="1">Repressor involved in the biosynthesis of the osmoprotectant glycine betaine. It represses transcription of the choline transporter BetT and the genes of BetAB involved in the synthesis of glycine betaine (By similarity).</text>
</comment>
<comment type="pathway">
    <text>Amine and polyamine biosynthesis; betaine biosynthesis via choline pathway [regulation].</text>
</comment>